<accession>Q89AY9</accession>
<sequence length="55" mass="6438">MAKSSREKIKLISSSGSKHYYTTTKNKKAPSKKIELKKYDPKIRKHVLYKEAKIK</sequence>
<organism>
    <name type="scientific">Buchnera aphidicola subsp. Baizongia pistaciae (strain Bp)</name>
    <dbReference type="NCBI Taxonomy" id="224915"/>
    <lineage>
        <taxon>Bacteria</taxon>
        <taxon>Pseudomonadati</taxon>
        <taxon>Pseudomonadota</taxon>
        <taxon>Gammaproteobacteria</taxon>
        <taxon>Enterobacterales</taxon>
        <taxon>Erwiniaceae</taxon>
        <taxon>Buchnera</taxon>
    </lineage>
</organism>
<gene>
    <name evidence="1" type="primary">rpmG</name>
    <name type="ordered locus">bbp_079</name>
</gene>
<name>RL33_BUCBP</name>
<feature type="chain" id="PRO_0000170146" description="Large ribosomal subunit protein bL33">
    <location>
        <begin position="1"/>
        <end position="55"/>
    </location>
</feature>
<reference key="1">
    <citation type="journal article" date="2003" name="Proc. Natl. Acad. Sci. U.S.A.">
        <title>Reductive genome evolution in Buchnera aphidicola.</title>
        <authorList>
            <person name="van Ham R.C.H.J."/>
            <person name="Kamerbeek J."/>
            <person name="Palacios C."/>
            <person name="Rausell C."/>
            <person name="Abascal F."/>
            <person name="Bastolla U."/>
            <person name="Fernandez J.M."/>
            <person name="Jimenez L."/>
            <person name="Postigo M."/>
            <person name="Silva F.J."/>
            <person name="Tamames J."/>
            <person name="Viguera E."/>
            <person name="Latorre A."/>
            <person name="Valencia A."/>
            <person name="Moran F."/>
            <person name="Moya A."/>
        </authorList>
    </citation>
    <scope>NUCLEOTIDE SEQUENCE [LARGE SCALE GENOMIC DNA]</scope>
    <source>
        <strain>Bp</strain>
    </source>
</reference>
<comment type="similarity">
    <text evidence="1">Belongs to the bacterial ribosomal protein bL33 family.</text>
</comment>
<proteinExistence type="inferred from homology"/>
<dbReference type="EMBL" id="AE016826">
    <property type="protein sequence ID" value="AAO26815.1"/>
    <property type="molecule type" value="Genomic_DNA"/>
</dbReference>
<dbReference type="RefSeq" id="WP_011091216.1">
    <property type="nucleotide sequence ID" value="NC_004545.1"/>
</dbReference>
<dbReference type="SMR" id="Q89AY9"/>
<dbReference type="STRING" id="224915.bbp_079"/>
<dbReference type="KEGG" id="bab:bbp_079"/>
<dbReference type="eggNOG" id="COG0267">
    <property type="taxonomic scope" value="Bacteria"/>
</dbReference>
<dbReference type="HOGENOM" id="CLU_190949_1_1_6"/>
<dbReference type="OrthoDB" id="21586at2"/>
<dbReference type="Proteomes" id="UP000000601">
    <property type="component" value="Chromosome"/>
</dbReference>
<dbReference type="GO" id="GO:0022625">
    <property type="term" value="C:cytosolic large ribosomal subunit"/>
    <property type="evidence" value="ECO:0007669"/>
    <property type="project" value="TreeGrafter"/>
</dbReference>
<dbReference type="GO" id="GO:0003735">
    <property type="term" value="F:structural constituent of ribosome"/>
    <property type="evidence" value="ECO:0007669"/>
    <property type="project" value="InterPro"/>
</dbReference>
<dbReference type="GO" id="GO:0006412">
    <property type="term" value="P:translation"/>
    <property type="evidence" value="ECO:0007669"/>
    <property type="project" value="UniProtKB-UniRule"/>
</dbReference>
<dbReference type="Gene3D" id="2.20.28.120">
    <property type="entry name" value="Ribosomal protein L33"/>
    <property type="match status" value="1"/>
</dbReference>
<dbReference type="HAMAP" id="MF_00294">
    <property type="entry name" value="Ribosomal_bL33"/>
    <property type="match status" value="1"/>
</dbReference>
<dbReference type="InterPro" id="IPR001705">
    <property type="entry name" value="Ribosomal_bL33"/>
</dbReference>
<dbReference type="InterPro" id="IPR018264">
    <property type="entry name" value="Ribosomal_bL33_CS"/>
</dbReference>
<dbReference type="InterPro" id="IPR038584">
    <property type="entry name" value="Ribosomal_bL33_sf"/>
</dbReference>
<dbReference type="InterPro" id="IPR011332">
    <property type="entry name" value="Ribosomal_zn-bd"/>
</dbReference>
<dbReference type="NCBIfam" id="NF001860">
    <property type="entry name" value="PRK00595.1"/>
    <property type="match status" value="1"/>
</dbReference>
<dbReference type="NCBIfam" id="TIGR01023">
    <property type="entry name" value="rpmG_bact"/>
    <property type="match status" value="1"/>
</dbReference>
<dbReference type="PANTHER" id="PTHR15238">
    <property type="entry name" value="54S RIBOSOMAL PROTEIN L39, MITOCHONDRIAL"/>
    <property type="match status" value="1"/>
</dbReference>
<dbReference type="PANTHER" id="PTHR15238:SF1">
    <property type="entry name" value="LARGE RIBOSOMAL SUBUNIT PROTEIN BL33M"/>
    <property type="match status" value="1"/>
</dbReference>
<dbReference type="Pfam" id="PF00471">
    <property type="entry name" value="Ribosomal_L33"/>
    <property type="match status" value="1"/>
</dbReference>
<dbReference type="SUPFAM" id="SSF57829">
    <property type="entry name" value="Zn-binding ribosomal proteins"/>
    <property type="match status" value="1"/>
</dbReference>
<dbReference type="PROSITE" id="PS00582">
    <property type="entry name" value="RIBOSOMAL_L33"/>
    <property type="match status" value="1"/>
</dbReference>
<keyword id="KW-1185">Reference proteome</keyword>
<keyword id="KW-0687">Ribonucleoprotein</keyword>
<keyword id="KW-0689">Ribosomal protein</keyword>
<protein>
    <recommendedName>
        <fullName evidence="1">Large ribosomal subunit protein bL33</fullName>
    </recommendedName>
    <alternativeName>
        <fullName evidence="2">50S ribosomal protein L33</fullName>
    </alternativeName>
</protein>
<evidence type="ECO:0000255" key="1">
    <source>
        <dbReference type="HAMAP-Rule" id="MF_00294"/>
    </source>
</evidence>
<evidence type="ECO:0000305" key="2"/>